<protein>
    <recommendedName>
        <fullName evidence="1">Protein RnfH</fullName>
    </recommendedName>
</protein>
<feature type="chain" id="PRO_1000081140" description="Protein RnfH">
    <location>
        <begin position="1"/>
        <end position="92"/>
    </location>
</feature>
<comment type="similarity">
    <text evidence="1">Belongs to the UPF0125 (RnfH) family.</text>
</comment>
<dbReference type="EMBL" id="CP000381">
    <property type="protein sequence ID" value="ABX72953.1"/>
    <property type="molecule type" value="Genomic_DNA"/>
</dbReference>
<dbReference type="RefSeq" id="WP_002217575.1">
    <property type="nucleotide sequence ID" value="NC_010120.1"/>
</dbReference>
<dbReference type="SMR" id="A9M3M8"/>
<dbReference type="KEGG" id="nmn:NMCC_0760"/>
<dbReference type="HOGENOM" id="CLU_150721_1_0_4"/>
<dbReference type="Proteomes" id="UP000001177">
    <property type="component" value="Chromosome"/>
</dbReference>
<dbReference type="Gene3D" id="3.10.20.280">
    <property type="entry name" value="RnfH-like"/>
    <property type="match status" value="1"/>
</dbReference>
<dbReference type="HAMAP" id="MF_00460">
    <property type="entry name" value="UPF0125_RnfH"/>
    <property type="match status" value="1"/>
</dbReference>
<dbReference type="InterPro" id="IPR016155">
    <property type="entry name" value="Mopterin_synth/thiamin_S_b"/>
</dbReference>
<dbReference type="InterPro" id="IPR005346">
    <property type="entry name" value="RnfH"/>
</dbReference>
<dbReference type="InterPro" id="IPR037021">
    <property type="entry name" value="RnfH_sf"/>
</dbReference>
<dbReference type="NCBIfam" id="NF002490">
    <property type="entry name" value="PRK01777.1"/>
    <property type="match status" value="1"/>
</dbReference>
<dbReference type="PANTHER" id="PTHR37483">
    <property type="entry name" value="UPF0125 PROTEIN RATB"/>
    <property type="match status" value="1"/>
</dbReference>
<dbReference type="PANTHER" id="PTHR37483:SF1">
    <property type="entry name" value="UPF0125 PROTEIN RATB"/>
    <property type="match status" value="1"/>
</dbReference>
<dbReference type="Pfam" id="PF03658">
    <property type="entry name" value="Ub-RnfH"/>
    <property type="match status" value="1"/>
</dbReference>
<dbReference type="SUPFAM" id="SSF54285">
    <property type="entry name" value="MoaD/ThiS"/>
    <property type="match status" value="1"/>
</dbReference>
<organism>
    <name type="scientific">Neisseria meningitidis serogroup C (strain 053442)</name>
    <dbReference type="NCBI Taxonomy" id="374833"/>
    <lineage>
        <taxon>Bacteria</taxon>
        <taxon>Pseudomonadati</taxon>
        <taxon>Pseudomonadota</taxon>
        <taxon>Betaproteobacteria</taxon>
        <taxon>Neisseriales</taxon>
        <taxon>Neisseriaceae</taxon>
        <taxon>Neisseria</taxon>
    </lineage>
</organism>
<gene>
    <name evidence="1" type="primary">rnfH</name>
    <name type="ordered locus">NMCC_0760</name>
</gene>
<evidence type="ECO:0000255" key="1">
    <source>
        <dbReference type="HAMAP-Rule" id="MF_00460"/>
    </source>
</evidence>
<accession>A9M3M8</accession>
<sequence length="92" mass="10344">MLEIEIVYGLPDRQVLKTMQLAEGTTVRAAALQSGLDGIFEDLNLHSAPLGIFGKAVKDDTPLRDGDRIEVYRPLLIDPKEARRKRVQNQEE</sequence>
<name>RNFH_NEIM0</name>
<proteinExistence type="inferred from homology"/>
<reference key="1">
    <citation type="journal article" date="2008" name="Genomics">
        <title>Characterization of ST-4821 complex, a unique Neisseria meningitidis clone.</title>
        <authorList>
            <person name="Peng J."/>
            <person name="Yang L."/>
            <person name="Yang F."/>
            <person name="Yang J."/>
            <person name="Yan Y."/>
            <person name="Nie H."/>
            <person name="Zhang X."/>
            <person name="Xiong Z."/>
            <person name="Jiang Y."/>
            <person name="Cheng F."/>
            <person name="Xu X."/>
            <person name="Chen S."/>
            <person name="Sun L."/>
            <person name="Li W."/>
            <person name="Shen Y."/>
            <person name="Shao Z."/>
            <person name="Liang X."/>
            <person name="Xu J."/>
            <person name="Jin Q."/>
        </authorList>
    </citation>
    <scope>NUCLEOTIDE SEQUENCE [LARGE SCALE GENOMIC DNA]</scope>
    <source>
        <strain>053442</strain>
    </source>
</reference>